<reference key="1">
    <citation type="submission" date="2001-03" db="EMBL/GenBank/DDBJ databases">
        <title>Genomic sequence of mouse CHIF (FXYD4).</title>
        <authorList>
            <person name="Garty H."/>
        </authorList>
    </citation>
    <scope>NUCLEOTIDE SEQUENCE [GENOMIC DNA]</scope>
    <source>
        <strain>129/SvJ</strain>
    </source>
</reference>
<reference key="2">
    <citation type="journal article" date="2005" name="Science">
        <title>The transcriptional landscape of the mammalian genome.</title>
        <authorList>
            <person name="Carninci P."/>
            <person name="Kasukawa T."/>
            <person name="Katayama S."/>
            <person name="Gough J."/>
            <person name="Frith M.C."/>
            <person name="Maeda N."/>
            <person name="Oyama R."/>
            <person name="Ravasi T."/>
            <person name="Lenhard B."/>
            <person name="Wells C."/>
            <person name="Kodzius R."/>
            <person name="Shimokawa K."/>
            <person name="Bajic V.B."/>
            <person name="Brenner S.E."/>
            <person name="Batalov S."/>
            <person name="Forrest A.R."/>
            <person name="Zavolan M."/>
            <person name="Davis M.J."/>
            <person name="Wilming L.G."/>
            <person name="Aidinis V."/>
            <person name="Allen J.E."/>
            <person name="Ambesi-Impiombato A."/>
            <person name="Apweiler R."/>
            <person name="Aturaliya R.N."/>
            <person name="Bailey T.L."/>
            <person name="Bansal M."/>
            <person name="Baxter L."/>
            <person name="Beisel K.W."/>
            <person name="Bersano T."/>
            <person name="Bono H."/>
            <person name="Chalk A.M."/>
            <person name="Chiu K.P."/>
            <person name="Choudhary V."/>
            <person name="Christoffels A."/>
            <person name="Clutterbuck D.R."/>
            <person name="Crowe M.L."/>
            <person name="Dalla E."/>
            <person name="Dalrymple B.P."/>
            <person name="de Bono B."/>
            <person name="Della Gatta G."/>
            <person name="di Bernardo D."/>
            <person name="Down T."/>
            <person name="Engstrom P."/>
            <person name="Fagiolini M."/>
            <person name="Faulkner G."/>
            <person name="Fletcher C.F."/>
            <person name="Fukushima T."/>
            <person name="Furuno M."/>
            <person name="Futaki S."/>
            <person name="Gariboldi M."/>
            <person name="Georgii-Hemming P."/>
            <person name="Gingeras T.R."/>
            <person name="Gojobori T."/>
            <person name="Green R.E."/>
            <person name="Gustincich S."/>
            <person name="Harbers M."/>
            <person name="Hayashi Y."/>
            <person name="Hensch T.K."/>
            <person name="Hirokawa N."/>
            <person name="Hill D."/>
            <person name="Huminiecki L."/>
            <person name="Iacono M."/>
            <person name="Ikeo K."/>
            <person name="Iwama A."/>
            <person name="Ishikawa T."/>
            <person name="Jakt M."/>
            <person name="Kanapin A."/>
            <person name="Katoh M."/>
            <person name="Kawasawa Y."/>
            <person name="Kelso J."/>
            <person name="Kitamura H."/>
            <person name="Kitano H."/>
            <person name="Kollias G."/>
            <person name="Krishnan S.P."/>
            <person name="Kruger A."/>
            <person name="Kummerfeld S.K."/>
            <person name="Kurochkin I.V."/>
            <person name="Lareau L.F."/>
            <person name="Lazarevic D."/>
            <person name="Lipovich L."/>
            <person name="Liu J."/>
            <person name="Liuni S."/>
            <person name="McWilliam S."/>
            <person name="Madan Babu M."/>
            <person name="Madera M."/>
            <person name="Marchionni L."/>
            <person name="Matsuda H."/>
            <person name="Matsuzawa S."/>
            <person name="Miki H."/>
            <person name="Mignone F."/>
            <person name="Miyake S."/>
            <person name="Morris K."/>
            <person name="Mottagui-Tabar S."/>
            <person name="Mulder N."/>
            <person name="Nakano N."/>
            <person name="Nakauchi H."/>
            <person name="Ng P."/>
            <person name="Nilsson R."/>
            <person name="Nishiguchi S."/>
            <person name="Nishikawa S."/>
            <person name="Nori F."/>
            <person name="Ohara O."/>
            <person name="Okazaki Y."/>
            <person name="Orlando V."/>
            <person name="Pang K.C."/>
            <person name="Pavan W.J."/>
            <person name="Pavesi G."/>
            <person name="Pesole G."/>
            <person name="Petrovsky N."/>
            <person name="Piazza S."/>
            <person name="Reed J."/>
            <person name="Reid J.F."/>
            <person name="Ring B.Z."/>
            <person name="Ringwald M."/>
            <person name="Rost B."/>
            <person name="Ruan Y."/>
            <person name="Salzberg S.L."/>
            <person name="Sandelin A."/>
            <person name="Schneider C."/>
            <person name="Schoenbach C."/>
            <person name="Sekiguchi K."/>
            <person name="Semple C.A."/>
            <person name="Seno S."/>
            <person name="Sessa L."/>
            <person name="Sheng Y."/>
            <person name="Shibata Y."/>
            <person name="Shimada H."/>
            <person name="Shimada K."/>
            <person name="Silva D."/>
            <person name="Sinclair B."/>
            <person name="Sperling S."/>
            <person name="Stupka E."/>
            <person name="Sugiura K."/>
            <person name="Sultana R."/>
            <person name="Takenaka Y."/>
            <person name="Taki K."/>
            <person name="Tammoja K."/>
            <person name="Tan S.L."/>
            <person name="Tang S."/>
            <person name="Taylor M.S."/>
            <person name="Tegner J."/>
            <person name="Teichmann S.A."/>
            <person name="Ueda H.R."/>
            <person name="van Nimwegen E."/>
            <person name="Verardo R."/>
            <person name="Wei C.L."/>
            <person name="Yagi K."/>
            <person name="Yamanishi H."/>
            <person name="Zabarovsky E."/>
            <person name="Zhu S."/>
            <person name="Zimmer A."/>
            <person name="Hide W."/>
            <person name="Bult C."/>
            <person name="Grimmond S.M."/>
            <person name="Teasdale R.D."/>
            <person name="Liu E.T."/>
            <person name="Brusic V."/>
            <person name="Quackenbush J."/>
            <person name="Wahlestedt C."/>
            <person name="Mattick J.S."/>
            <person name="Hume D.A."/>
            <person name="Kai C."/>
            <person name="Sasaki D."/>
            <person name="Tomaru Y."/>
            <person name="Fukuda S."/>
            <person name="Kanamori-Katayama M."/>
            <person name="Suzuki M."/>
            <person name="Aoki J."/>
            <person name="Arakawa T."/>
            <person name="Iida J."/>
            <person name="Imamura K."/>
            <person name="Itoh M."/>
            <person name="Kato T."/>
            <person name="Kawaji H."/>
            <person name="Kawagashira N."/>
            <person name="Kawashima T."/>
            <person name="Kojima M."/>
            <person name="Kondo S."/>
            <person name="Konno H."/>
            <person name="Nakano K."/>
            <person name="Ninomiya N."/>
            <person name="Nishio T."/>
            <person name="Okada M."/>
            <person name="Plessy C."/>
            <person name="Shibata K."/>
            <person name="Shiraki T."/>
            <person name="Suzuki S."/>
            <person name="Tagami M."/>
            <person name="Waki K."/>
            <person name="Watahiki A."/>
            <person name="Okamura-Oho Y."/>
            <person name="Suzuki H."/>
            <person name="Kawai J."/>
            <person name="Hayashizaki Y."/>
        </authorList>
    </citation>
    <scope>NUCLEOTIDE SEQUENCE [LARGE SCALE MRNA]</scope>
    <source>
        <strain>C57BL/6J</strain>
        <tissue>Kidney</tissue>
    </source>
</reference>
<reference key="3">
    <citation type="journal article" date="2004" name="Genome Res.">
        <title>The status, quality, and expansion of the NIH full-length cDNA project: the Mammalian Gene Collection (MGC).</title>
        <authorList>
            <consortium name="The MGC Project Team"/>
        </authorList>
    </citation>
    <scope>NUCLEOTIDE SEQUENCE [LARGE SCALE MRNA]</scope>
    <source>
        <tissue>Kidney</tissue>
    </source>
</reference>
<protein>
    <recommendedName>
        <fullName>FXYD domain-containing ion transport regulator 4</fullName>
    </recommendedName>
    <alternativeName>
        <fullName>Channel-inducing factor</fullName>
        <shortName>CHIF</shortName>
    </alternativeName>
</protein>
<dbReference type="EMBL" id="AF362729">
    <property type="protein sequence ID" value="AAK51508.1"/>
    <property type="molecule type" value="Genomic_DNA"/>
</dbReference>
<dbReference type="EMBL" id="AK018728">
    <property type="protein sequence ID" value="BAB31372.1"/>
    <property type="molecule type" value="mRNA"/>
</dbReference>
<dbReference type="EMBL" id="BC086918">
    <property type="protein sequence ID" value="AAH86918.1"/>
    <property type="molecule type" value="mRNA"/>
</dbReference>
<dbReference type="CCDS" id="CCDS20468.1"/>
<dbReference type="RefSeq" id="NP_001166843.1">
    <property type="nucleotide sequence ID" value="NM_001173372.1"/>
</dbReference>
<dbReference type="RefSeq" id="NP_387468.1">
    <property type="nucleotide sequence ID" value="NM_033648.1"/>
</dbReference>
<dbReference type="RefSeq" id="XP_006505358.1">
    <property type="nucleotide sequence ID" value="XM_006505295.5"/>
</dbReference>
<dbReference type="SMR" id="Q9D2W0"/>
<dbReference type="BioGRID" id="223770">
    <property type="interactions" value="1"/>
</dbReference>
<dbReference type="FunCoup" id="Q9D2W0">
    <property type="interactions" value="1"/>
</dbReference>
<dbReference type="STRING" id="10090.ENSMUSP00000005114"/>
<dbReference type="iPTMnet" id="Q9D2W0"/>
<dbReference type="PhosphoSitePlus" id="Q9D2W0"/>
<dbReference type="PaxDb" id="10090-ENSMUSP00000005114"/>
<dbReference type="ProteomicsDB" id="266893"/>
<dbReference type="Antibodypedia" id="2752">
    <property type="antibodies" value="25 antibodies from 15 providers"/>
</dbReference>
<dbReference type="DNASU" id="108017"/>
<dbReference type="Ensembl" id="ENSMUST00000005114.10">
    <property type="protein sequence ID" value="ENSMUSP00000005114.8"/>
    <property type="gene ID" value="ENSMUSG00000004988.10"/>
</dbReference>
<dbReference type="Ensembl" id="ENSMUST00000203082.3">
    <property type="protein sequence ID" value="ENSMUSP00000144700.2"/>
    <property type="gene ID" value="ENSMUSG00000004988.10"/>
</dbReference>
<dbReference type="Ensembl" id="ENSMUST00000204214.3">
    <property type="protein sequence ID" value="ENSMUSP00000145302.2"/>
    <property type="gene ID" value="ENSMUSG00000004988.10"/>
</dbReference>
<dbReference type="GeneID" id="108017"/>
<dbReference type="KEGG" id="mmu:108017"/>
<dbReference type="UCSC" id="uc009dlh.1">
    <property type="organism name" value="mouse"/>
</dbReference>
<dbReference type="AGR" id="MGI:1889005"/>
<dbReference type="CTD" id="53828"/>
<dbReference type="MGI" id="MGI:1889005">
    <property type="gene designation" value="Fxyd4"/>
</dbReference>
<dbReference type="VEuPathDB" id="HostDB:ENSMUSG00000004988"/>
<dbReference type="eggNOG" id="ENOG502TDGY">
    <property type="taxonomic scope" value="Eukaryota"/>
</dbReference>
<dbReference type="GeneTree" id="ENSGT00940000153062"/>
<dbReference type="HOGENOM" id="CLU_171208_0_1_1"/>
<dbReference type="InParanoid" id="Q9D2W0"/>
<dbReference type="OMA" id="QLGGMIC"/>
<dbReference type="PhylomeDB" id="Q9D2W0"/>
<dbReference type="TreeFam" id="TF333443"/>
<dbReference type="Reactome" id="R-MMU-5578775">
    <property type="pathway name" value="Ion homeostasis"/>
</dbReference>
<dbReference type="Reactome" id="R-MMU-936837">
    <property type="pathway name" value="Ion transport by P-type ATPases"/>
</dbReference>
<dbReference type="BioGRID-ORCS" id="108017">
    <property type="hits" value="3 hits in 77 CRISPR screens"/>
</dbReference>
<dbReference type="ChiTaRS" id="Fxyd4">
    <property type="organism name" value="mouse"/>
</dbReference>
<dbReference type="PRO" id="PR:Q9D2W0"/>
<dbReference type="Proteomes" id="UP000000589">
    <property type="component" value="Chromosome 6"/>
</dbReference>
<dbReference type="RNAct" id="Q9D2W0">
    <property type="molecule type" value="protein"/>
</dbReference>
<dbReference type="Bgee" id="ENSMUSG00000004988">
    <property type="expression patterns" value="Expressed in right kidney and 77 other cell types or tissues"/>
</dbReference>
<dbReference type="ExpressionAtlas" id="Q9D2W0">
    <property type="expression patterns" value="baseline and differential"/>
</dbReference>
<dbReference type="GO" id="GO:0016323">
    <property type="term" value="C:basolateral plasma membrane"/>
    <property type="evidence" value="ECO:0000250"/>
    <property type="project" value="UniProtKB"/>
</dbReference>
<dbReference type="GO" id="GO:0005890">
    <property type="term" value="C:sodium:potassium-exchanging ATPase complex"/>
    <property type="evidence" value="ECO:0000250"/>
    <property type="project" value="UniProtKB"/>
</dbReference>
<dbReference type="GO" id="GO:0051117">
    <property type="term" value="F:ATPase binding"/>
    <property type="evidence" value="ECO:0000353"/>
    <property type="project" value="MGI"/>
</dbReference>
<dbReference type="GO" id="GO:0017080">
    <property type="term" value="F:sodium channel regulator activity"/>
    <property type="evidence" value="ECO:0000250"/>
    <property type="project" value="UniProtKB"/>
</dbReference>
<dbReference type="GO" id="GO:0071805">
    <property type="term" value="P:potassium ion transmembrane transport"/>
    <property type="evidence" value="ECO:0007669"/>
    <property type="project" value="InterPro"/>
</dbReference>
<dbReference type="GO" id="GO:0043269">
    <property type="term" value="P:regulation of monoatomic ion transport"/>
    <property type="evidence" value="ECO:0007669"/>
    <property type="project" value="InterPro"/>
</dbReference>
<dbReference type="GO" id="GO:0006814">
    <property type="term" value="P:sodium ion transport"/>
    <property type="evidence" value="ECO:0007669"/>
    <property type="project" value="UniProtKB-KW"/>
</dbReference>
<dbReference type="CDD" id="cd20322">
    <property type="entry name" value="FXYD4"/>
    <property type="match status" value="1"/>
</dbReference>
<dbReference type="FunFam" id="1.20.5.780:FF:000007">
    <property type="entry name" value="FXYD domain-containing ion transport regulator"/>
    <property type="match status" value="1"/>
</dbReference>
<dbReference type="Gene3D" id="1.20.5.780">
    <property type="entry name" value="Single helix bin"/>
    <property type="match status" value="1"/>
</dbReference>
<dbReference type="InterPro" id="IPR047283">
    <property type="entry name" value="FXYD4"/>
</dbReference>
<dbReference type="InterPro" id="IPR047297">
    <property type="entry name" value="FXYD_motif"/>
</dbReference>
<dbReference type="InterPro" id="IPR000272">
    <property type="entry name" value="Ion-transport_regulator_FXYD"/>
</dbReference>
<dbReference type="PANTHER" id="PTHR14132:SF10">
    <property type="entry name" value="FXYD DOMAIN-CONTAINING ION TRANSPORT REGULATOR 4"/>
    <property type="match status" value="1"/>
</dbReference>
<dbReference type="PANTHER" id="PTHR14132">
    <property type="entry name" value="SODIUM/POTASSIUM-TRANSPORTING ATPASE SUBUNIT GAMMA"/>
    <property type="match status" value="1"/>
</dbReference>
<dbReference type="Pfam" id="PF02038">
    <property type="entry name" value="ATP1G1_PLM_MAT8"/>
    <property type="match status" value="1"/>
</dbReference>
<dbReference type="PROSITE" id="PS01310">
    <property type="entry name" value="FXYD"/>
    <property type="match status" value="1"/>
</dbReference>
<gene>
    <name type="primary">Fxyd4</name>
</gene>
<name>FXYD4_MOUSE</name>
<accession>Q9D2W0</accession>
<comment type="function">
    <text evidence="1">Associates with and regulates the activity of the sodium/potassium-transporting ATPase (NKA) which catalyzes the hydrolysis of ATP coupled with the exchange of Na(+) and K(+) ions across the plasma membrane. Increases the apparent affinity of the transporter for Na(+) and increases NKA activity.</text>
</comment>
<comment type="subunit">
    <text evidence="1">Regulatory subunit of the sodium/potassium-transporting ATPase which is composed of a catalytic alpha subunit, a non-catalytic beta subunit and a regulatory subunit. The regulatory subunit, a member of the FXYD protein family, modulates the enzymatic activity in a tissue- and isoform-specific way by changing affinities of the Na+/K+-ATPase toward Na(+), K(+) or ATP.</text>
</comment>
<comment type="subcellular location">
    <subcellularLocation>
        <location evidence="1">Cell membrane</location>
        <topology evidence="1">Single-pass type I membrane protein</topology>
    </subcellularLocation>
    <subcellularLocation>
        <location evidence="1">Basolateral cell membrane</location>
        <topology evidence="1">Single-pass type I membrane protein</topology>
    </subcellularLocation>
    <text evidence="1">Detected in the basolateral membrane of collecting duct principal cells.</text>
</comment>
<comment type="similarity">
    <text evidence="3">Belongs to the FXYD family.</text>
</comment>
<proteinExistence type="inferred from homology"/>
<sequence length="88" mass="9269">MEEITCAFLLLLAGLPALEASDPVDKDSPFYYDWESLQLGGLIFGGLLCIAGIAMALSGKCKCRRTHKPSSLPGKATPLIIPGSANTC</sequence>
<evidence type="ECO:0000250" key="1">
    <source>
        <dbReference type="UniProtKB" id="Q63113"/>
    </source>
</evidence>
<evidence type="ECO:0000255" key="2"/>
<evidence type="ECO:0000305" key="3"/>
<feature type="signal peptide" evidence="2">
    <location>
        <begin position="1"/>
        <end position="20"/>
    </location>
</feature>
<feature type="chain" id="PRO_0000010367" description="FXYD domain-containing ion transport regulator 4">
    <location>
        <begin position="21"/>
        <end position="88"/>
    </location>
</feature>
<feature type="topological domain" description="Extracellular" evidence="2">
    <location>
        <begin position="21"/>
        <end position="38"/>
    </location>
</feature>
<feature type="transmembrane region" description="Helical" evidence="1">
    <location>
        <begin position="39"/>
        <end position="59"/>
    </location>
</feature>
<feature type="topological domain" description="Cytoplasmic" evidence="2">
    <location>
        <begin position="60"/>
        <end position="88"/>
    </location>
</feature>
<organism>
    <name type="scientific">Mus musculus</name>
    <name type="common">Mouse</name>
    <dbReference type="NCBI Taxonomy" id="10090"/>
    <lineage>
        <taxon>Eukaryota</taxon>
        <taxon>Metazoa</taxon>
        <taxon>Chordata</taxon>
        <taxon>Craniata</taxon>
        <taxon>Vertebrata</taxon>
        <taxon>Euteleostomi</taxon>
        <taxon>Mammalia</taxon>
        <taxon>Eutheria</taxon>
        <taxon>Euarchontoglires</taxon>
        <taxon>Glires</taxon>
        <taxon>Rodentia</taxon>
        <taxon>Myomorpha</taxon>
        <taxon>Muroidea</taxon>
        <taxon>Muridae</taxon>
        <taxon>Murinae</taxon>
        <taxon>Mus</taxon>
        <taxon>Mus</taxon>
    </lineage>
</organism>
<keyword id="KW-1003">Cell membrane</keyword>
<keyword id="KW-0406">Ion transport</keyword>
<keyword id="KW-0472">Membrane</keyword>
<keyword id="KW-0630">Potassium</keyword>
<keyword id="KW-0633">Potassium transport</keyword>
<keyword id="KW-1185">Reference proteome</keyword>
<keyword id="KW-0732">Signal</keyword>
<keyword id="KW-0915">Sodium</keyword>
<keyword id="KW-0739">Sodium transport</keyword>
<keyword id="KW-0740">Sodium/potassium transport</keyword>
<keyword id="KW-0812">Transmembrane</keyword>
<keyword id="KW-1133">Transmembrane helix</keyword>
<keyword id="KW-0813">Transport</keyword>